<evidence type="ECO:0000250" key="1"/>
<evidence type="ECO:0000250" key="2">
    <source>
        <dbReference type="UniProtKB" id="O00267"/>
    </source>
</evidence>
<evidence type="ECO:0000256" key="3">
    <source>
        <dbReference type="SAM" id="MobiDB-lite"/>
    </source>
</evidence>
<evidence type="ECO:0000303" key="4">
    <source>
    </source>
</evidence>
<evidence type="ECO:0000305" key="5"/>
<evidence type="ECO:0007744" key="6">
    <source>
    </source>
</evidence>
<evidence type="ECO:0007744" key="7">
    <source>
    </source>
</evidence>
<evidence type="ECO:0007744" key="8">
    <source>
    </source>
</evidence>
<evidence type="ECO:0007744" key="9">
    <source>
    </source>
</evidence>
<reference key="1">
    <citation type="journal article" date="1998" name="Genomics">
        <title>Isolation of murine SPT5 homologue: completion of the isolation and characterization of human and murine homologues of yeast chromatin structural protein complex SPT4, SPT5, and SPT6.</title>
        <authorList>
            <person name="Chiang P.-W."/>
            <person name="Stubbs L."/>
            <person name="Zhang L."/>
            <person name="Kurnit D.M."/>
        </authorList>
    </citation>
    <scope>NUCLEOTIDE SEQUENCE [MRNA] (ISOFORM 1)</scope>
</reference>
<reference key="2">
    <citation type="journal article" date="2005" name="Science">
        <title>The transcriptional landscape of the mammalian genome.</title>
        <authorList>
            <person name="Carninci P."/>
            <person name="Kasukawa T."/>
            <person name="Katayama S."/>
            <person name="Gough J."/>
            <person name="Frith M.C."/>
            <person name="Maeda N."/>
            <person name="Oyama R."/>
            <person name="Ravasi T."/>
            <person name="Lenhard B."/>
            <person name="Wells C."/>
            <person name="Kodzius R."/>
            <person name="Shimokawa K."/>
            <person name="Bajic V.B."/>
            <person name="Brenner S.E."/>
            <person name="Batalov S."/>
            <person name="Forrest A.R."/>
            <person name="Zavolan M."/>
            <person name="Davis M.J."/>
            <person name="Wilming L.G."/>
            <person name="Aidinis V."/>
            <person name="Allen J.E."/>
            <person name="Ambesi-Impiombato A."/>
            <person name="Apweiler R."/>
            <person name="Aturaliya R.N."/>
            <person name="Bailey T.L."/>
            <person name="Bansal M."/>
            <person name="Baxter L."/>
            <person name="Beisel K.W."/>
            <person name="Bersano T."/>
            <person name="Bono H."/>
            <person name="Chalk A.M."/>
            <person name="Chiu K.P."/>
            <person name="Choudhary V."/>
            <person name="Christoffels A."/>
            <person name="Clutterbuck D.R."/>
            <person name="Crowe M.L."/>
            <person name="Dalla E."/>
            <person name="Dalrymple B.P."/>
            <person name="de Bono B."/>
            <person name="Della Gatta G."/>
            <person name="di Bernardo D."/>
            <person name="Down T."/>
            <person name="Engstrom P."/>
            <person name="Fagiolini M."/>
            <person name="Faulkner G."/>
            <person name="Fletcher C.F."/>
            <person name="Fukushima T."/>
            <person name="Furuno M."/>
            <person name="Futaki S."/>
            <person name="Gariboldi M."/>
            <person name="Georgii-Hemming P."/>
            <person name="Gingeras T.R."/>
            <person name="Gojobori T."/>
            <person name="Green R.E."/>
            <person name="Gustincich S."/>
            <person name="Harbers M."/>
            <person name="Hayashi Y."/>
            <person name="Hensch T.K."/>
            <person name="Hirokawa N."/>
            <person name="Hill D."/>
            <person name="Huminiecki L."/>
            <person name="Iacono M."/>
            <person name="Ikeo K."/>
            <person name="Iwama A."/>
            <person name="Ishikawa T."/>
            <person name="Jakt M."/>
            <person name="Kanapin A."/>
            <person name="Katoh M."/>
            <person name="Kawasawa Y."/>
            <person name="Kelso J."/>
            <person name="Kitamura H."/>
            <person name="Kitano H."/>
            <person name="Kollias G."/>
            <person name="Krishnan S.P."/>
            <person name="Kruger A."/>
            <person name="Kummerfeld S.K."/>
            <person name="Kurochkin I.V."/>
            <person name="Lareau L.F."/>
            <person name="Lazarevic D."/>
            <person name="Lipovich L."/>
            <person name="Liu J."/>
            <person name="Liuni S."/>
            <person name="McWilliam S."/>
            <person name="Madan Babu M."/>
            <person name="Madera M."/>
            <person name="Marchionni L."/>
            <person name="Matsuda H."/>
            <person name="Matsuzawa S."/>
            <person name="Miki H."/>
            <person name="Mignone F."/>
            <person name="Miyake S."/>
            <person name="Morris K."/>
            <person name="Mottagui-Tabar S."/>
            <person name="Mulder N."/>
            <person name="Nakano N."/>
            <person name="Nakauchi H."/>
            <person name="Ng P."/>
            <person name="Nilsson R."/>
            <person name="Nishiguchi S."/>
            <person name="Nishikawa S."/>
            <person name="Nori F."/>
            <person name="Ohara O."/>
            <person name="Okazaki Y."/>
            <person name="Orlando V."/>
            <person name="Pang K.C."/>
            <person name="Pavan W.J."/>
            <person name="Pavesi G."/>
            <person name="Pesole G."/>
            <person name="Petrovsky N."/>
            <person name="Piazza S."/>
            <person name="Reed J."/>
            <person name="Reid J.F."/>
            <person name="Ring B.Z."/>
            <person name="Ringwald M."/>
            <person name="Rost B."/>
            <person name="Ruan Y."/>
            <person name="Salzberg S.L."/>
            <person name="Sandelin A."/>
            <person name="Schneider C."/>
            <person name="Schoenbach C."/>
            <person name="Sekiguchi K."/>
            <person name="Semple C.A."/>
            <person name="Seno S."/>
            <person name="Sessa L."/>
            <person name="Sheng Y."/>
            <person name="Shibata Y."/>
            <person name="Shimada H."/>
            <person name="Shimada K."/>
            <person name="Silva D."/>
            <person name="Sinclair B."/>
            <person name="Sperling S."/>
            <person name="Stupka E."/>
            <person name="Sugiura K."/>
            <person name="Sultana R."/>
            <person name="Takenaka Y."/>
            <person name="Taki K."/>
            <person name="Tammoja K."/>
            <person name="Tan S.L."/>
            <person name="Tang S."/>
            <person name="Taylor M.S."/>
            <person name="Tegner J."/>
            <person name="Teichmann S.A."/>
            <person name="Ueda H.R."/>
            <person name="van Nimwegen E."/>
            <person name="Verardo R."/>
            <person name="Wei C.L."/>
            <person name="Yagi K."/>
            <person name="Yamanishi H."/>
            <person name="Zabarovsky E."/>
            <person name="Zhu S."/>
            <person name="Zimmer A."/>
            <person name="Hide W."/>
            <person name="Bult C."/>
            <person name="Grimmond S.M."/>
            <person name="Teasdale R.D."/>
            <person name="Liu E.T."/>
            <person name="Brusic V."/>
            <person name="Quackenbush J."/>
            <person name="Wahlestedt C."/>
            <person name="Mattick J.S."/>
            <person name="Hume D.A."/>
            <person name="Kai C."/>
            <person name="Sasaki D."/>
            <person name="Tomaru Y."/>
            <person name="Fukuda S."/>
            <person name="Kanamori-Katayama M."/>
            <person name="Suzuki M."/>
            <person name="Aoki J."/>
            <person name="Arakawa T."/>
            <person name="Iida J."/>
            <person name="Imamura K."/>
            <person name="Itoh M."/>
            <person name="Kato T."/>
            <person name="Kawaji H."/>
            <person name="Kawagashira N."/>
            <person name="Kawashima T."/>
            <person name="Kojima M."/>
            <person name="Kondo S."/>
            <person name="Konno H."/>
            <person name="Nakano K."/>
            <person name="Ninomiya N."/>
            <person name="Nishio T."/>
            <person name="Okada M."/>
            <person name="Plessy C."/>
            <person name="Shibata K."/>
            <person name="Shiraki T."/>
            <person name="Suzuki S."/>
            <person name="Tagami M."/>
            <person name="Waki K."/>
            <person name="Watahiki A."/>
            <person name="Okamura-Oho Y."/>
            <person name="Suzuki H."/>
            <person name="Kawai J."/>
            <person name="Hayashizaki Y."/>
        </authorList>
    </citation>
    <scope>NUCLEOTIDE SEQUENCE [LARGE SCALE MRNA] (ISOFORM 1)</scope>
    <source>
        <strain>C57BL/6J</strain>
        <tissue>Heart</tissue>
        <tissue>Mammary gland</tissue>
        <tissue>Placenta</tissue>
    </source>
</reference>
<reference key="3">
    <citation type="journal article" date="2004" name="Genome Res.">
        <title>The status, quality, and expansion of the NIH full-length cDNA project: the Mammalian Gene Collection (MGC).</title>
        <authorList>
            <consortium name="The MGC Project Team"/>
        </authorList>
    </citation>
    <scope>NUCLEOTIDE SEQUENCE [LARGE SCALE MRNA] (ISOFORMS 1 AND 2)</scope>
    <source>
        <strain>C57BL/6J</strain>
        <strain>FVB/N</strain>
        <tissue>Brain</tissue>
        <tissue>Mammary tumor</tissue>
        <tissue>Olfactory epithelium</tissue>
        <tissue>Salivary gland</tissue>
    </source>
</reference>
<reference key="4">
    <citation type="journal article" date="2007" name="Proc. Natl. Acad. Sci. U.S.A.">
        <title>Large-scale phosphorylation analysis of mouse liver.</title>
        <authorList>
            <person name="Villen J."/>
            <person name="Beausoleil S.A."/>
            <person name="Gerber S.A."/>
            <person name="Gygi S.P."/>
        </authorList>
    </citation>
    <scope>PHOSPHORYLATION [LARGE SCALE ANALYSIS] AT SER-664</scope>
    <scope>IDENTIFICATION BY MASS SPECTROMETRY [LARGE SCALE ANALYSIS]</scope>
    <source>
        <tissue>Liver</tissue>
    </source>
</reference>
<reference key="5">
    <citation type="journal article" date="2010" name="Cell">
        <title>A tissue-specific atlas of mouse protein phosphorylation and expression.</title>
        <authorList>
            <person name="Huttlin E.L."/>
            <person name="Jedrychowski M.P."/>
            <person name="Elias J.E."/>
            <person name="Goswami T."/>
            <person name="Rad R."/>
            <person name="Beausoleil S.A."/>
            <person name="Villen J."/>
            <person name="Haas W."/>
            <person name="Sowa M.E."/>
            <person name="Gygi S.P."/>
        </authorList>
    </citation>
    <scope>PHOSPHORYLATION [LARGE SCALE ANALYSIS] AT SER-32; SER-36; THR-661 AND SER-664</scope>
    <scope>IDENTIFICATION BY MASS SPECTROMETRY [LARGE SCALE ANALYSIS]</scope>
    <source>
        <tissue>Brain</tissue>
        <tissue>Brown adipose tissue</tissue>
        <tissue>Heart</tissue>
        <tissue>Kidney</tissue>
        <tissue>Liver</tissue>
        <tissue>Lung</tissue>
        <tissue>Pancreas</tissue>
        <tissue>Spleen</tissue>
        <tissue>Testis</tissue>
    </source>
</reference>
<reference key="6">
    <citation type="journal article" date="2013" name="Mol. Cell">
        <title>SIRT5-mediated lysine desuccinylation impacts diverse metabolic pathways.</title>
        <authorList>
            <person name="Park J."/>
            <person name="Chen Y."/>
            <person name="Tishkoff D.X."/>
            <person name="Peng C."/>
            <person name="Tan M."/>
            <person name="Dai L."/>
            <person name="Xie Z."/>
            <person name="Zhang Y."/>
            <person name="Zwaans B.M."/>
            <person name="Skinner M.E."/>
            <person name="Lombard D.B."/>
            <person name="Zhao Y."/>
        </authorList>
    </citation>
    <scope>ACETYLATION [LARGE SCALE ANALYSIS] AT LYS-712</scope>
    <scope>IDENTIFICATION BY MASS SPECTROMETRY [LARGE SCALE ANALYSIS]</scope>
    <source>
        <tissue>Embryonic fibroblast</tissue>
    </source>
</reference>
<reference key="7">
    <citation type="journal article" date="2014" name="Mol. Cell. Proteomics">
        <title>Immunoaffinity enrichment and mass spectrometry analysis of protein methylation.</title>
        <authorList>
            <person name="Guo A."/>
            <person name="Gu H."/>
            <person name="Zhou J."/>
            <person name="Mulhern D."/>
            <person name="Wang Y."/>
            <person name="Lee K.A."/>
            <person name="Yang V."/>
            <person name="Aguiar M."/>
            <person name="Kornhauser J."/>
            <person name="Jia X."/>
            <person name="Ren J."/>
            <person name="Beausoleil S.A."/>
            <person name="Silva J.C."/>
            <person name="Vemulapalli V."/>
            <person name="Bedford M.T."/>
            <person name="Comb M.J."/>
        </authorList>
    </citation>
    <scope>METHYLATION [LARGE SCALE ANALYSIS] AT ARG-690</scope>
    <scope>IDENTIFICATION BY MASS SPECTROMETRY [LARGE SCALE ANALYSIS]</scope>
    <source>
        <tissue>Embryo</tissue>
    </source>
</reference>
<name>SPT5H_MOUSE</name>
<dbReference type="EMBL" id="U88539">
    <property type="protein sequence ID" value="AAC40052.1"/>
    <property type="molecule type" value="mRNA"/>
</dbReference>
<dbReference type="EMBL" id="AK145117">
    <property type="protein sequence ID" value="BAE26244.1"/>
    <property type="molecule type" value="mRNA"/>
</dbReference>
<dbReference type="EMBL" id="AK146055">
    <property type="protein sequence ID" value="BAE26864.1"/>
    <property type="molecule type" value="mRNA"/>
</dbReference>
<dbReference type="EMBL" id="AK146453">
    <property type="protein sequence ID" value="BAE27184.1"/>
    <property type="molecule type" value="mRNA"/>
</dbReference>
<dbReference type="EMBL" id="AK146583">
    <property type="protein sequence ID" value="BAE27278.1"/>
    <property type="molecule type" value="mRNA"/>
</dbReference>
<dbReference type="EMBL" id="AK146650">
    <property type="protein sequence ID" value="BAE27330.1"/>
    <property type="molecule type" value="mRNA"/>
</dbReference>
<dbReference type="EMBL" id="BC007132">
    <property type="protein sequence ID" value="AAH07132.1"/>
    <property type="molecule type" value="mRNA"/>
</dbReference>
<dbReference type="EMBL" id="BC057449">
    <property type="protein sequence ID" value="AAH57449.1"/>
    <property type="status" value="ALT_INIT"/>
    <property type="molecule type" value="mRNA"/>
</dbReference>
<dbReference type="EMBL" id="BC058598">
    <property type="protein sequence ID" value="AAH58598.1"/>
    <property type="molecule type" value="mRNA"/>
</dbReference>
<dbReference type="EMBL" id="BC059849">
    <property type="protein sequence ID" value="AAH59849.1"/>
    <property type="molecule type" value="mRNA"/>
</dbReference>
<dbReference type="CCDS" id="CCDS39857.1">
    <molecule id="O55201-1"/>
</dbReference>
<dbReference type="PIR" id="T42204">
    <property type="entry name" value="T42204"/>
</dbReference>
<dbReference type="RefSeq" id="NP_038704.1">
    <molecule id="O55201-1"/>
    <property type="nucleotide sequence ID" value="NM_013676.1"/>
</dbReference>
<dbReference type="SMR" id="O55201"/>
<dbReference type="BioGRID" id="203575">
    <property type="interactions" value="30"/>
</dbReference>
<dbReference type="FunCoup" id="O55201">
    <property type="interactions" value="4731"/>
</dbReference>
<dbReference type="IntAct" id="O55201">
    <property type="interactions" value="3"/>
</dbReference>
<dbReference type="STRING" id="10090.ENSMUSP00000147164"/>
<dbReference type="GlyGen" id="O55201">
    <property type="glycosylation" value="5 sites, 1 N-linked glycan (1 site), 1 O-linked glycan (1 site)"/>
</dbReference>
<dbReference type="iPTMnet" id="O55201"/>
<dbReference type="PhosphoSitePlus" id="O55201"/>
<dbReference type="SwissPalm" id="O55201"/>
<dbReference type="jPOST" id="O55201"/>
<dbReference type="PaxDb" id="10090-ENSMUSP00000003527"/>
<dbReference type="PeptideAtlas" id="O55201"/>
<dbReference type="ProteomicsDB" id="254549">
    <molecule id="O55201-1"/>
</dbReference>
<dbReference type="ProteomicsDB" id="254550">
    <molecule id="O55201-2"/>
</dbReference>
<dbReference type="Pumba" id="O55201"/>
<dbReference type="Antibodypedia" id="16797">
    <property type="antibodies" value="203 antibodies from 30 providers"/>
</dbReference>
<dbReference type="DNASU" id="20924"/>
<dbReference type="Ensembl" id="ENSMUST00000003527.10">
    <molecule id="O55201-1"/>
    <property type="protein sequence ID" value="ENSMUSP00000003527.9"/>
    <property type="gene ID" value="ENSMUSG00000003435.10"/>
</dbReference>
<dbReference type="Ensembl" id="ENSMUST00000209141.2">
    <molecule id="O55201-1"/>
    <property type="protein sequence ID" value="ENSMUSP00000147164.2"/>
    <property type="gene ID" value="ENSMUSG00000003435.10"/>
</dbReference>
<dbReference type="GeneID" id="20924"/>
<dbReference type="KEGG" id="mmu:20924"/>
<dbReference type="UCSC" id="uc009fyh.1">
    <molecule id="O55201-1"/>
    <property type="organism name" value="mouse"/>
</dbReference>
<dbReference type="AGR" id="MGI:1202400"/>
<dbReference type="CTD" id="20924"/>
<dbReference type="MGI" id="MGI:1202400">
    <property type="gene designation" value="Supt5"/>
</dbReference>
<dbReference type="VEuPathDB" id="HostDB:ENSMUSG00000003435"/>
<dbReference type="eggNOG" id="KOG1999">
    <property type="taxonomic scope" value="Eukaryota"/>
</dbReference>
<dbReference type="GeneTree" id="ENSGT00440000037640"/>
<dbReference type="HOGENOM" id="CLU_003537_0_0_1"/>
<dbReference type="InParanoid" id="O55201"/>
<dbReference type="OMA" id="YPVGYMN"/>
<dbReference type="OrthoDB" id="28901at2759"/>
<dbReference type="PhylomeDB" id="O55201"/>
<dbReference type="TreeFam" id="TF105730"/>
<dbReference type="Reactome" id="R-MMU-112382">
    <property type="pathway name" value="Formation of RNA Pol II elongation complex"/>
</dbReference>
<dbReference type="Reactome" id="R-MMU-113418">
    <property type="pathway name" value="Formation of the Early Elongation Complex"/>
</dbReference>
<dbReference type="Reactome" id="R-MMU-674695">
    <property type="pathway name" value="RNA Polymerase II Pre-transcription Events"/>
</dbReference>
<dbReference type="Reactome" id="R-MMU-6796648">
    <property type="pathway name" value="TP53 Regulates Transcription of DNA Repair Genes"/>
</dbReference>
<dbReference type="Reactome" id="R-MMU-6807505">
    <property type="pathway name" value="RNA polymerase II transcribes snRNA genes"/>
</dbReference>
<dbReference type="Reactome" id="R-MMU-72086">
    <property type="pathway name" value="mRNA Capping"/>
</dbReference>
<dbReference type="Reactome" id="R-MMU-75955">
    <property type="pathway name" value="RNA Polymerase II Transcription Elongation"/>
</dbReference>
<dbReference type="Reactome" id="R-MMU-77075">
    <property type="pathway name" value="RNA Pol II CTD phosphorylation and interaction with CE"/>
</dbReference>
<dbReference type="BioGRID-ORCS" id="20924">
    <property type="hits" value="26 hits in 116 CRISPR screens"/>
</dbReference>
<dbReference type="ChiTaRS" id="Supt5">
    <property type="organism name" value="mouse"/>
</dbReference>
<dbReference type="PRO" id="PR:O55201"/>
<dbReference type="Proteomes" id="UP000000589">
    <property type="component" value="Chromosome 7"/>
</dbReference>
<dbReference type="RNAct" id="O55201">
    <property type="molecule type" value="protein"/>
</dbReference>
<dbReference type="Bgee" id="ENSMUSG00000003435">
    <property type="expression patterns" value="Expressed in placenta labyrinth and 279 other cell types or tissues"/>
</dbReference>
<dbReference type="ExpressionAtlas" id="O55201">
    <property type="expression patterns" value="baseline and differential"/>
</dbReference>
<dbReference type="GO" id="GO:0032044">
    <property type="term" value="C:DSIF complex"/>
    <property type="evidence" value="ECO:0000250"/>
    <property type="project" value="UniProtKB"/>
</dbReference>
<dbReference type="GO" id="GO:0003682">
    <property type="term" value="F:chromatin binding"/>
    <property type="evidence" value="ECO:0000314"/>
    <property type="project" value="MGI"/>
</dbReference>
<dbReference type="GO" id="GO:0019899">
    <property type="term" value="F:enzyme binding"/>
    <property type="evidence" value="ECO:0007669"/>
    <property type="project" value="Ensembl"/>
</dbReference>
<dbReference type="GO" id="GO:0046982">
    <property type="term" value="F:protein heterodimerization activity"/>
    <property type="evidence" value="ECO:0007669"/>
    <property type="project" value="Ensembl"/>
</dbReference>
<dbReference type="GO" id="GO:0032785">
    <property type="term" value="P:negative regulation of DNA-templated transcription, elongation"/>
    <property type="evidence" value="ECO:0007669"/>
    <property type="project" value="Ensembl"/>
</dbReference>
<dbReference type="GO" id="GO:0000122">
    <property type="term" value="P:negative regulation of transcription by RNA polymerase II"/>
    <property type="evidence" value="ECO:0007669"/>
    <property type="project" value="Ensembl"/>
</dbReference>
<dbReference type="GO" id="GO:0016239">
    <property type="term" value="P:positive regulation of macroautophagy"/>
    <property type="evidence" value="ECO:0007669"/>
    <property type="project" value="Ensembl"/>
</dbReference>
<dbReference type="GO" id="GO:0032968">
    <property type="term" value="P:positive regulation of transcription elongation by RNA polymerase II"/>
    <property type="evidence" value="ECO:0007669"/>
    <property type="project" value="Ensembl"/>
</dbReference>
<dbReference type="GO" id="GO:0140673">
    <property type="term" value="P:transcription elongation-coupled chromatin remodeling"/>
    <property type="evidence" value="ECO:0007669"/>
    <property type="project" value="InterPro"/>
</dbReference>
<dbReference type="CDD" id="cd06081">
    <property type="entry name" value="KOW_Spt5_1"/>
    <property type="match status" value="1"/>
</dbReference>
<dbReference type="CDD" id="cd06082">
    <property type="entry name" value="KOW_Spt5_2"/>
    <property type="match status" value="1"/>
</dbReference>
<dbReference type="CDD" id="cd06083">
    <property type="entry name" value="KOW_Spt5_3"/>
    <property type="match status" value="1"/>
</dbReference>
<dbReference type="CDD" id="cd06084">
    <property type="entry name" value="KOW_Spt5_4"/>
    <property type="match status" value="1"/>
</dbReference>
<dbReference type="CDD" id="cd06085">
    <property type="entry name" value="KOW_Spt5_5"/>
    <property type="match status" value="1"/>
</dbReference>
<dbReference type="CDD" id="cd06086">
    <property type="entry name" value="KOW_Spt5_6"/>
    <property type="match status" value="1"/>
</dbReference>
<dbReference type="CDD" id="cd09888">
    <property type="entry name" value="NGN_Euk"/>
    <property type="match status" value="1"/>
</dbReference>
<dbReference type="FunFam" id="2.30.30.30:FF:000013">
    <property type="entry name" value="Transcription elongation factor SPT5"/>
    <property type="match status" value="1"/>
</dbReference>
<dbReference type="FunFam" id="2.30.30.30:FF:000016">
    <property type="entry name" value="Transcription elongation factor SPT5"/>
    <property type="match status" value="1"/>
</dbReference>
<dbReference type="FunFam" id="2.30.30.30:FF:000017">
    <property type="entry name" value="Transcription elongation factor SPT5"/>
    <property type="match status" value="1"/>
</dbReference>
<dbReference type="FunFam" id="3.30.70.940:FF:000003">
    <property type="entry name" value="Transcription elongation factor SPT5"/>
    <property type="match status" value="1"/>
</dbReference>
<dbReference type="Gene3D" id="2.30.30.30">
    <property type="match status" value="3"/>
</dbReference>
<dbReference type="Gene3D" id="3.30.70.940">
    <property type="entry name" value="NusG, N-terminal domain"/>
    <property type="match status" value="1"/>
</dbReference>
<dbReference type="InterPro" id="IPR005824">
    <property type="entry name" value="KOW"/>
</dbReference>
<dbReference type="InterPro" id="IPR041973">
    <property type="entry name" value="KOW_Spt5_1"/>
</dbReference>
<dbReference type="InterPro" id="IPR041975">
    <property type="entry name" value="KOW_Spt5_2"/>
</dbReference>
<dbReference type="InterPro" id="IPR041976">
    <property type="entry name" value="KOW_Spt5_3"/>
</dbReference>
<dbReference type="InterPro" id="IPR041977">
    <property type="entry name" value="KOW_Spt5_4"/>
</dbReference>
<dbReference type="InterPro" id="IPR041978">
    <property type="entry name" value="KOW_Spt5_5"/>
</dbReference>
<dbReference type="InterPro" id="IPR041980">
    <property type="entry name" value="KOW_Spt5_6"/>
</dbReference>
<dbReference type="InterPro" id="IPR005100">
    <property type="entry name" value="NGN-domain"/>
</dbReference>
<dbReference type="InterPro" id="IPR006645">
    <property type="entry name" value="NGN-like_dom"/>
</dbReference>
<dbReference type="InterPro" id="IPR036735">
    <property type="entry name" value="NGN_dom_sf"/>
</dbReference>
<dbReference type="InterPro" id="IPR039385">
    <property type="entry name" value="NGN_Euk"/>
</dbReference>
<dbReference type="InterPro" id="IPR014722">
    <property type="entry name" value="Rib_uL2_dom2"/>
</dbReference>
<dbReference type="InterPro" id="IPR039659">
    <property type="entry name" value="SPT5"/>
</dbReference>
<dbReference type="InterPro" id="IPR024945">
    <property type="entry name" value="Spt5_C_dom"/>
</dbReference>
<dbReference type="InterPro" id="IPR022581">
    <property type="entry name" value="Spt5_N"/>
</dbReference>
<dbReference type="InterPro" id="IPR017071">
    <property type="entry name" value="TF_Spt5_eukaryote"/>
</dbReference>
<dbReference type="InterPro" id="IPR008991">
    <property type="entry name" value="Translation_prot_SH3-like_sf"/>
</dbReference>
<dbReference type="PANTHER" id="PTHR11125">
    <property type="entry name" value="SUPPRESSOR OF TY 5"/>
    <property type="match status" value="1"/>
</dbReference>
<dbReference type="PANTHER" id="PTHR11125:SF7">
    <property type="entry name" value="TRANSCRIPTION ELONGATION FACTOR SPT5"/>
    <property type="match status" value="1"/>
</dbReference>
<dbReference type="Pfam" id="PF00467">
    <property type="entry name" value="KOW"/>
    <property type="match status" value="1"/>
</dbReference>
<dbReference type="Pfam" id="PF23042">
    <property type="entry name" value="KOW1_SPT5"/>
    <property type="match status" value="1"/>
</dbReference>
<dbReference type="Pfam" id="PF23284">
    <property type="entry name" value="KOW2_Spt5"/>
    <property type="match status" value="1"/>
</dbReference>
<dbReference type="Pfam" id="PF23291">
    <property type="entry name" value="KOW4_SPT5"/>
    <property type="match status" value="1"/>
</dbReference>
<dbReference type="Pfam" id="PF23290">
    <property type="entry name" value="KOW5_SPT5"/>
    <property type="match status" value="1"/>
</dbReference>
<dbReference type="Pfam" id="PF23288">
    <property type="entry name" value="KOW6_SPT5"/>
    <property type="match status" value="1"/>
</dbReference>
<dbReference type="Pfam" id="PF23287">
    <property type="entry name" value="KOW7_SPT5"/>
    <property type="match status" value="1"/>
</dbReference>
<dbReference type="Pfam" id="PF23037">
    <property type="entry name" value="KOWx_SPT5"/>
    <property type="match status" value="1"/>
</dbReference>
<dbReference type="Pfam" id="PF03439">
    <property type="entry name" value="Spt5-NGN"/>
    <property type="match status" value="1"/>
</dbReference>
<dbReference type="Pfam" id="PF11942">
    <property type="entry name" value="Spt5_N"/>
    <property type="match status" value="1"/>
</dbReference>
<dbReference type="PIRSF" id="PIRSF036945">
    <property type="entry name" value="Spt5"/>
    <property type="match status" value="1"/>
</dbReference>
<dbReference type="SMART" id="SM01104">
    <property type="entry name" value="CTD"/>
    <property type="match status" value="1"/>
</dbReference>
<dbReference type="SMART" id="SM00739">
    <property type="entry name" value="KOW"/>
    <property type="match status" value="6"/>
</dbReference>
<dbReference type="SMART" id="SM00738">
    <property type="entry name" value="NGN"/>
    <property type="match status" value="1"/>
</dbReference>
<dbReference type="SUPFAM" id="SSF50104">
    <property type="entry name" value="Translation proteins SH3-like domain"/>
    <property type="match status" value="1"/>
</dbReference>
<protein>
    <recommendedName>
        <fullName>Transcription elongation factor SPT5</fullName>
    </recommendedName>
    <alternativeName>
        <fullName>DRB sensitivity-inducing factor large subunit</fullName>
        <shortName>DSIF large subunit</shortName>
    </alternativeName>
</protein>
<comment type="function">
    <text evidence="2">Component of the DRB sensitivity-inducing factor complex (DSIF complex), which regulates mRNA processing and transcription elongation by RNA polymerase II. DSIF positively regulates mRNA capping by stimulating the mRNA guanylyltransferase activity of RNGTT/CAP1A. DSIF also acts cooperatively with the negative elongation factor complex (NELF complex) to enhance transcriptional pausing at sites proximal to the promoter. Transcriptional pausing may facilitate the assembly of an elongation competent RNA polymerase II complex. DSIF and NELF promote pausing by inhibition of the transcription elongation factor TFIIS/S-II. TFIIS/S-II binds to RNA polymerase II at transcription pause sites and stimulates the weak intrinsic nuclease activity of the enzyme. Cleavage of blocked transcripts by RNA polymerase II promotes the resumption of transcription from the new 3' terminus and may allow repeated attempts at transcription through natural pause sites. Following phosphorylation by CDK9, DSIF can also positively regulate transcriptional elongation.</text>
</comment>
<comment type="subunit">
    <text evidence="2">Interacts with SUPT4H1 to form DSIF. DSIF interacts with the positive transcription elongation factor b complex (P-TEFb complex), which is composed of CDK9 and cyclin-T (CCNT1 or CCNT2). DSIF interacts with RNA polymerase II, and this interaction is reduced by phosphorylation of the C-terminal domain (CTD) of POLR2A by P-TEFb. DSIF also interacts with the NELF complex, which is composed of NELFA, NELFB, NELFD and NELFE, and this interaction occurs following prior binding of DSIF to RNA polymerase II. Also interacts with PRMT1/HRMT1L2, HTATSF1/TATSF1, RNGTT/CAP1A, PRMT5/SKB1, SUPT6H, and can interact with PIN1. Component of a complex which is at least composed of HTATSF1/Tat-SF1, the P-TEFb complex components CDK9 and CCNT1, RNA polymerase II, SUPT5H, and NCL/nucleolin. Interacts with MCM3AP.</text>
</comment>
<comment type="subcellular location">
    <subcellularLocation>
        <location evidence="2">Nucleus</location>
    </subcellularLocation>
</comment>
<comment type="alternative products">
    <event type="alternative splicing"/>
    <isoform>
        <id>O55201-1</id>
        <name>1</name>
        <sequence type="displayed"/>
    </isoform>
    <isoform>
        <id>O55201-2</id>
        <name>2</name>
        <sequence type="described" ref="VSP_016283"/>
    </isoform>
</comment>
<comment type="PTM">
    <text evidence="2">Methylated by PRMT1/HRMT1L2 and PRMT5/SKB1. Methylation negatively regulates interaction with P-TEFb and RNA polymerase II.</text>
</comment>
<comment type="PTM">
    <text evidence="2">Phosphorylated by CDK7 and CDK9. Phosphorylation by P-TEFb (CDK9) at Thr residues of the C-terminal repeats alleviates transcriptional pausing and promotes transcription elongation. Dephosphorylated by the INTAC complex when transcripts are unfavorably configured for transcriptional elongation, leading to premature transcription termination: dephosphorylation is mediated by the PPP2CA component of the INTAC complex. Dephosphorylated by the PNUTS-PP1 complex in termination zones downstream of poly(A) sites, thereby promoting deceleration of RNA polymerase II transcription. Dephosphorylated by the PNUTS-PP1 complex in termination zones downstream of poly(A) sites, thereby promoting deceleration of RNA polymerase II transcription. Phosphorylation may also stimulate interaction with PIN1. Bulk phosphorylation occurs predominantly in mitosis.</text>
</comment>
<comment type="PTM">
    <text evidence="2">Ubiquitinated by UBR5 when not assembled in the DSIF complex, leading to its degradation: UBR5 recognizes and binds a degron that is not accessible when SUPT5H is part of the DSIF complex.</text>
</comment>
<comment type="similarity">
    <text evidence="5">Belongs to the SPT5 family.</text>
</comment>
<comment type="sequence caution" evidence="5">
    <conflict type="erroneous initiation">
        <sequence resource="EMBL-CDS" id="AAH57449"/>
    </conflict>
    <text>Extended N-terminus.</text>
</comment>
<accession>O55201</accession>
<accession>Q3UJ77</accession>
<accession>Q3UJH1</accession>
<accession>Q3UKD7</accession>
<accession>Q3UM54</accession>
<accession>Q6PB73</accession>
<accession>Q6PDP0</accession>
<accession>Q6PFR4</accession>
<gene>
    <name type="primary">Supt5h</name>
    <name type="synonym">Supt5</name>
</gene>
<proteinExistence type="evidence at protein level"/>
<keyword id="KW-0007">Acetylation</keyword>
<keyword id="KW-0010">Activator</keyword>
<keyword id="KW-0025">Alternative splicing</keyword>
<keyword id="KW-1017">Isopeptide bond</keyword>
<keyword id="KW-0488">Methylation</keyword>
<keyword id="KW-0539">Nucleus</keyword>
<keyword id="KW-0597">Phosphoprotein</keyword>
<keyword id="KW-1185">Reference proteome</keyword>
<keyword id="KW-0677">Repeat</keyword>
<keyword id="KW-0678">Repressor</keyword>
<keyword id="KW-0804">Transcription</keyword>
<keyword id="KW-0805">Transcription regulation</keyword>
<keyword id="KW-0832">Ubl conjugation</keyword>
<organism>
    <name type="scientific">Mus musculus</name>
    <name type="common">Mouse</name>
    <dbReference type="NCBI Taxonomy" id="10090"/>
    <lineage>
        <taxon>Eukaryota</taxon>
        <taxon>Metazoa</taxon>
        <taxon>Chordata</taxon>
        <taxon>Craniata</taxon>
        <taxon>Vertebrata</taxon>
        <taxon>Euteleostomi</taxon>
        <taxon>Mammalia</taxon>
        <taxon>Eutheria</taxon>
        <taxon>Euarchontoglires</taxon>
        <taxon>Glires</taxon>
        <taxon>Rodentia</taxon>
        <taxon>Myomorpha</taxon>
        <taxon>Muroidea</taxon>
        <taxon>Muridae</taxon>
        <taxon>Murinae</taxon>
        <taxon>Mus</taxon>
        <taxon>Mus</taxon>
    </lineage>
</organism>
<feature type="chain" id="PRO_0000208469" description="Transcription elongation factor SPT5">
    <location>
        <begin position="1"/>
        <end position="1082"/>
    </location>
</feature>
<feature type="domain" description="KOW 1">
    <location>
        <begin position="271"/>
        <end position="304"/>
    </location>
</feature>
<feature type="domain" description="KOW 2">
    <location>
        <begin position="418"/>
        <end position="449"/>
    </location>
</feature>
<feature type="domain" description="KOW 3">
    <location>
        <begin position="470"/>
        <end position="501"/>
    </location>
</feature>
<feature type="domain" description="KOW 4">
    <location>
        <begin position="592"/>
        <end position="625"/>
    </location>
</feature>
<feature type="domain" description="KOW 5">
    <location>
        <begin position="698"/>
        <end position="731"/>
    </location>
</feature>
<feature type="repeat" description="CTR1-1; approximate">
    <location>
        <begin position="748"/>
        <end position="753"/>
    </location>
</feature>
<feature type="repeat" description="CTR1-2">
    <location>
        <begin position="754"/>
        <end position="759"/>
    </location>
</feature>
<feature type="repeat" description="CTR1-3">
    <location>
        <begin position="760"/>
        <end position="765"/>
    </location>
</feature>
<feature type="repeat" description="CTR1-4">
    <location>
        <begin position="766"/>
        <end position="772"/>
    </location>
</feature>
<feature type="repeat" description="CTR1-5">
    <location>
        <begin position="775"/>
        <end position="781"/>
    </location>
</feature>
<feature type="repeat" description="CTR1-6">
    <location>
        <begin position="782"/>
        <end position="788"/>
    </location>
</feature>
<feature type="repeat" description="CTR1-7">
    <location>
        <begin position="790"/>
        <end position="796"/>
    </location>
</feature>
<feature type="repeat" description="CTR1-8">
    <location>
        <begin position="797"/>
        <end position="803"/>
    </location>
</feature>
<feature type="repeat" description="CTR1-9">
    <location>
        <begin position="805"/>
        <end position="811"/>
    </location>
</feature>
<feature type="repeat" description="CTR2-1">
    <location>
        <begin position="838"/>
        <end position="845"/>
    </location>
</feature>
<feature type="repeat" description="CTR2-2; approximate">
    <location>
        <begin position="848"/>
        <end position="856"/>
    </location>
</feature>
<feature type="repeat" description="CTR2-3; approximate">
    <location>
        <begin position="857"/>
        <end position="863"/>
    </location>
</feature>
<feature type="repeat" description="CTR2-4; half-length">
    <location>
        <begin position="875"/>
        <end position="879"/>
    </location>
</feature>
<feature type="repeat" description="CTR2-5; approximate">
    <location>
        <begin position="890"/>
        <end position="896"/>
    </location>
</feature>
<feature type="repeat" description="CTR2-6">
    <location>
        <begin position="898"/>
        <end position="905"/>
    </location>
</feature>
<feature type="repeat" description="CTR2-7; approximate">
    <location>
        <begin position="910"/>
        <end position="915"/>
    </location>
</feature>
<feature type="repeat" description="CTR2-8">
    <location>
        <begin position="918"/>
        <end position="924"/>
    </location>
</feature>
<feature type="repeat" description="CTR2-9">
    <location>
        <begin position="926"/>
        <end position="933"/>
    </location>
</feature>
<feature type="repeat" description="CTR2-10">
    <location>
        <begin position="937"/>
        <end position="944"/>
    </location>
</feature>
<feature type="region of interest" description="Disordered" evidence="3">
    <location>
        <begin position="1"/>
        <end position="88"/>
    </location>
</feature>
<feature type="region of interest" description="Interaction with SUPT4H1 and SUPT4H2" evidence="1">
    <location>
        <begin position="174"/>
        <end position="268"/>
    </location>
</feature>
<feature type="region of interest" description="Interaction with RNA polymerase II" evidence="1">
    <location>
        <begin position="311"/>
        <end position="418"/>
    </location>
</feature>
<feature type="region of interest" description="Disordered" evidence="3">
    <location>
        <begin position="669"/>
        <end position="694"/>
    </location>
</feature>
<feature type="region of interest" description="Disordered" evidence="3">
    <location>
        <begin position="741"/>
        <end position="972"/>
    </location>
</feature>
<feature type="region of interest" description="9 X 7 AA approximate tandem repeats of G-S-[QR]-T-P-X-[YQ], motif CTR1">
    <location>
        <begin position="748"/>
        <end position="811"/>
    </location>
</feature>
<feature type="region of interest" description="10 X 8 AA approximate tandem repeats of P-[TS]-P-S-P-[QA]-[SG]-Y, motif CTR2">
    <location>
        <begin position="838"/>
        <end position="944"/>
    </location>
</feature>
<feature type="short sequence motif" description="UBR5-degron" evidence="2">
    <location>
        <begin position="326"/>
        <end position="332"/>
    </location>
</feature>
<feature type="compositionally biased region" description="Acidic residues" evidence="3">
    <location>
        <begin position="1"/>
        <end position="28"/>
    </location>
</feature>
<feature type="compositionally biased region" description="Acidic residues" evidence="3">
    <location>
        <begin position="38"/>
        <end position="62"/>
    </location>
</feature>
<feature type="compositionally biased region" description="Acidic residues" evidence="3">
    <location>
        <begin position="76"/>
        <end position="88"/>
    </location>
</feature>
<feature type="compositionally biased region" description="Gly residues" evidence="3">
    <location>
        <begin position="678"/>
        <end position="690"/>
    </location>
</feature>
<feature type="compositionally biased region" description="Polar residues" evidence="3">
    <location>
        <begin position="741"/>
        <end position="801"/>
    </location>
</feature>
<feature type="compositionally biased region" description="Acidic residues" evidence="3">
    <location>
        <begin position="828"/>
        <end position="838"/>
    </location>
</feature>
<feature type="compositionally biased region" description="Pro residues" evidence="3">
    <location>
        <begin position="851"/>
        <end position="860"/>
    </location>
</feature>
<feature type="compositionally biased region" description="Polar residues" evidence="3">
    <location>
        <begin position="861"/>
        <end position="884"/>
    </location>
</feature>
<feature type="compositionally biased region" description="Low complexity" evidence="3">
    <location>
        <begin position="890"/>
        <end position="905"/>
    </location>
</feature>
<feature type="binding site" evidence="2">
    <location>
        <position position="577"/>
    </location>
    <ligand>
        <name>RNA</name>
        <dbReference type="ChEBI" id="CHEBI:33697"/>
    </ligand>
</feature>
<feature type="binding site" evidence="2">
    <location>
        <position position="617"/>
    </location>
    <ligand>
        <name>DNA</name>
        <dbReference type="ChEBI" id="CHEBI:16991"/>
    </ligand>
</feature>
<feature type="modified residue" description="Phosphoserine" evidence="7">
    <location>
        <position position="32"/>
    </location>
</feature>
<feature type="modified residue" description="Phosphoserine" evidence="7">
    <location>
        <position position="36"/>
    </location>
</feature>
<feature type="modified residue" description="Phosphothreonine" evidence="7">
    <location>
        <position position="661"/>
    </location>
</feature>
<feature type="modified residue" description="Phosphoserine" evidence="6 7">
    <location>
        <position position="664"/>
    </location>
</feature>
<feature type="modified residue" description="Phosphoserine" evidence="2">
    <location>
        <position position="684"/>
    </location>
</feature>
<feature type="modified residue" description="Asymmetric dimethylarginine; alternate" evidence="2">
    <location>
        <position position="690"/>
    </location>
</feature>
<feature type="modified residue" description="Omega-N-methylarginine; alternate" evidence="9">
    <location>
        <position position="690"/>
    </location>
</feature>
<feature type="modified residue" description="Asymmetric dimethylarginine; alternate" evidence="2">
    <location>
        <position position="692"/>
    </location>
</feature>
<feature type="modified residue" description="Omega-N-methylarginine; alternate" evidence="2">
    <location>
        <position position="692"/>
    </location>
</feature>
<feature type="modified residue" description="Symmetric dimethylarginine; alternate" evidence="2">
    <location>
        <position position="692"/>
    </location>
</feature>
<feature type="modified residue" description="N6-acetyllysine" evidence="8">
    <location>
        <position position="712"/>
    </location>
</feature>
<feature type="modified residue" description="Phosphothreonine; by CDK9" evidence="2">
    <location>
        <position position="769"/>
    </location>
</feature>
<feature type="modified residue" description="Phosphothreonine; by CDK9" evidence="2">
    <location>
        <position position="778"/>
    </location>
</feature>
<feature type="modified residue" description="Phosphoserine" evidence="2">
    <location>
        <position position="783"/>
    </location>
</feature>
<feature type="modified residue" description="Phosphothreonine" evidence="2">
    <location>
        <position position="785"/>
    </location>
</feature>
<feature type="modified residue" description="Phosphothreonine" evidence="2">
    <location>
        <position position="793"/>
    </location>
</feature>
<feature type="modified residue" description="Phosphoserine" evidence="2">
    <location>
        <position position="798"/>
    </location>
</feature>
<feature type="modified residue" description="Phosphothreonine" evidence="2">
    <location>
        <position position="800"/>
    </location>
</feature>
<feature type="modified residue" description="Phosphothreonine" evidence="2">
    <location>
        <position position="808"/>
    </location>
</feature>
<feature type="modified residue" description="Phosphothreonine" evidence="2">
    <location>
        <position position="1028"/>
    </location>
</feature>
<feature type="cross-link" description="Glycyl lysine isopeptide (Lys-Gly) (interchain with G-Cter in SUMO2)" evidence="2">
    <location>
        <position position="141"/>
    </location>
</feature>
<feature type="cross-link" description="Glycyl lysine isopeptide (Lys-Gly) (interchain with G-Cter in SUMO2)" evidence="2">
    <location>
        <position position="1031"/>
    </location>
</feature>
<feature type="splice variant" id="VSP_016283" description="In isoform 2." evidence="4">
    <location>
        <begin position="1"/>
        <end position="194"/>
    </location>
</feature>
<feature type="sequence conflict" description="In Ref. 2; BAE26244." evidence="5" ref="2">
    <original>Q</original>
    <variation>R</variation>
    <location>
        <position position="30"/>
    </location>
</feature>
<feature type="sequence conflict" description="In Ref. 2; BAE26244." evidence="5" ref="2">
    <original>E</original>
    <variation>EE</variation>
    <location>
        <position position="51"/>
    </location>
</feature>
<feature type="sequence conflict" description="In Ref. 2; BAE27278." evidence="5" ref="2">
    <original>V</original>
    <variation>L</variation>
    <location>
        <position position="111"/>
    </location>
</feature>
<feature type="sequence conflict" description="In Ref. 2; BAE27184." evidence="5" ref="2">
    <original>K</original>
    <variation>E</variation>
    <location>
        <position position="229"/>
    </location>
</feature>
<feature type="sequence conflict" description="In Ref. 2; BAE26864." evidence="5" ref="2">
    <original>V</original>
    <variation>E</variation>
    <location>
        <position position="265"/>
    </location>
</feature>
<feature type="sequence conflict" description="In Ref. 3; AAH58598." evidence="5" ref="3">
    <original>H</original>
    <variation>N</variation>
    <location>
        <position position="416"/>
    </location>
</feature>
<feature type="sequence conflict" description="In Ref. 2; BAE26864." evidence="5" ref="2">
    <original>G</original>
    <variation>D</variation>
    <location>
        <position position="775"/>
    </location>
</feature>
<feature type="sequence conflict" description="In Ref. 2; BAE26864." evidence="5" ref="2">
    <original>L</original>
    <variation>I</variation>
    <location>
        <position position="1063"/>
    </location>
</feature>
<sequence length="1082" mass="120664">MSDSEDSNFSEEEDSERSSEAEEAEVEEDQRSAAGSEKEEEPEEEEEEEEEYDEEEEEEDDDRPPKKPRHGGFILDEADVDDEYEDEDQWEDGAEDILEKEEIEASNIDNVVLDEDRSGARRLQNLWRDQREEELGEYYMKKYAKSSVGETVYGGSDELSDDITQQQLLPGVKDPNLWTVKCKIGEERATAISLMRKFIAYQFTDTPLQIKSVVAPEHVKGYIYVEAYKQTHVKQAIEGVGNLRLGYWNQQMVPIKEMTDVLKVVKEVANLKPKSWVRLKRGIYKDDIAQVDYVEPSQNTISLKMIPRIDYDRIKARMSLKDWFAKRKKFKRPPQRLFDAEKIRSLGGDVASDGDFLIFEGNRYSRKGFLFKSFAMSAVITEGVKPTLSELEKFEDQPEGIDLEVVTESTGKEREHNFQPGDNVEVCEGELINLQGKVLSVDGNKITIMPKHEDLKDMLEFPAQELRKYFKMGDHVKVIAGRFEGDTGLIVRVEENFVILFSDLTMHELKVLPRDLQLCSETASGVDVGGQHEWGELVQLDPRTVGVIVRLERETFQVLNMHGKVVTVRHQAVTQKKDNRFAVALDSDQNNIHVKDIVKVIDGPHSGREGEIRHLYRSFAFLHCKKLVENGGMFVCKARHLVLAGGSKPRDVTNLTVGGFTPMSPRISSPMHPSAEGQHGGFGSPGGMSRGRGRRDNELIGQTVRISQGPYKGYIGVVKDATESTARVELHSTCQTISVDRQRLTTVDSQRPGGMTSTYGRTPMYGSQTPMYGSGSRTPMYGSQTPLQDGSRTPHYGSQTPLHDGSRTPAQSGAWDPNNPNTPSRAEEEYEYAFDDEPTPSPQAYGGTPNPQTPGYPDPSSPQVNPQYNPQTPGTPAMYNTDQFSPYAAPSPQGSYQPSPSPQSYHQVAPSPAGYQNTHSPASYHPTPSPMAYQASPSPSPVGYSPMTPGAPSPGGYNPHTPGSGIEQNSSDWVTTDIQVKVRDTYLDTQIVGQTGVIRSVTGGMCSVYLKDSEKVVSISSEHLEPITPTKNNKVKVILGEDREATGVLLSIDGEDGIIRMDLEDQQIKILNLRFLGKLLEA</sequence>